<organism>
    <name type="scientific">Streptococcus agalactiae serotype V (strain ATCC BAA-611 / 2603 V/R)</name>
    <dbReference type="NCBI Taxonomy" id="208435"/>
    <lineage>
        <taxon>Bacteria</taxon>
        <taxon>Bacillati</taxon>
        <taxon>Bacillota</taxon>
        <taxon>Bacilli</taxon>
        <taxon>Lactobacillales</taxon>
        <taxon>Streptococcaceae</taxon>
        <taxon>Streptococcus</taxon>
    </lineage>
</organism>
<gene>
    <name evidence="1" type="primary">recA</name>
    <name type="ordered locus">SAG2093</name>
</gene>
<protein>
    <recommendedName>
        <fullName evidence="1">Protein RecA</fullName>
    </recommendedName>
    <alternativeName>
        <fullName evidence="1">Recombinase A</fullName>
    </alternativeName>
</protein>
<accession>P65980</accession>
<accession>Q8DWW8</accession>
<accession>Q8E2S0</accession>
<sequence>MAKKTKKAEEITKKFGDERRKALDDALKNIEKDFGKGAVMRLGERAEQKVQVMSSGSLALDIALGAGGYPKGRIVEIYGPESSGKTTVALHAVAQAQKEGGIAAFIDAEHALDPAYAAALGVNIDELLLSQPDSGEQGLEIAGKLIDSGAVDLVVVDSVAALVPRAEIDGDIGDSHVGLQARMMSQAMRKLSASINKTKTIAIFINQLREKVGVMFGNPETTPGGRALKFYSSVRLDVRGNTQIKGTGEHKDHNVGKETKIKVVKNKVAPPFREAFVEIMYGEGISRTGELIKIASDLDIIQKAGAWYSYNGEKIGQGSENAKKYLADNPAIFDEIDHKVRVHFGMTEDDSPVQSELVEEKNEADDLVLDLDNAIEIEE</sequence>
<name>RECA_STRA5</name>
<reference key="1">
    <citation type="journal article" date="2002" name="Proc. Natl. Acad. Sci. U.S.A.">
        <title>Complete genome sequence and comparative genomic analysis of an emerging human pathogen, serotype V Streptococcus agalactiae.</title>
        <authorList>
            <person name="Tettelin H."/>
            <person name="Masignani V."/>
            <person name="Cieslewicz M.J."/>
            <person name="Eisen J.A."/>
            <person name="Peterson S.N."/>
            <person name="Wessels M.R."/>
            <person name="Paulsen I.T."/>
            <person name="Nelson K.E."/>
            <person name="Margarit I."/>
            <person name="Read T.D."/>
            <person name="Madoff L.C."/>
            <person name="Wolf A.M."/>
            <person name="Beanan M.J."/>
            <person name="Brinkac L.M."/>
            <person name="Daugherty S.C."/>
            <person name="DeBoy R.T."/>
            <person name="Durkin A.S."/>
            <person name="Kolonay J.F."/>
            <person name="Madupu R."/>
            <person name="Lewis M.R."/>
            <person name="Radune D."/>
            <person name="Fedorova N.B."/>
            <person name="Scanlan D."/>
            <person name="Khouri H.M."/>
            <person name="Mulligan S."/>
            <person name="Carty H.A."/>
            <person name="Cline R.T."/>
            <person name="Van Aken S.E."/>
            <person name="Gill J."/>
            <person name="Scarselli M."/>
            <person name="Mora M."/>
            <person name="Iacobini E.T."/>
            <person name="Brettoni C."/>
            <person name="Galli G."/>
            <person name="Mariani M."/>
            <person name="Vegni F."/>
            <person name="Maione D."/>
            <person name="Rinaudo D."/>
            <person name="Rappuoli R."/>
            <person name="Telford J.L."/>
            <person name="Kasper D.L."/>
            <person name="Grandi G."/>
            <person name="Fraser C.M."/>
        </authorList>
    </citation>
    <scope>NUCLEOTIDE SEQUENCE [LARGE SCALE GENOMIC DNA]</scope>
    <source>
        <strain>ATCC BAA-611 / 2603 V/R</strain>
    </source>
</reference>
<dbReference type="EMBL" id="AE009948">
    <property type="protein sequence ID" value="AAN00952.1"/>
    <property type="molecule type" value="Genomic_DNA"/>
</dbReference>
<dbReference type="RefSeq" id="NP_689079.1">
    <property type="nucleotide sequence ID" value="NC_004116.1"/>
</dbReference>
<dbReference type="RefSeq" id="WP_001085741.1">
    <property type="nucleotide sequence ID" value="NC_004116.1"/>
</dbReference>
<dbReference type="SMR" id="P65980"/>
<dbReference type="STRING" id="208435.SAG2093"/>
<dbReference type="GeneID" id="66886829"/>
<dbReference type="KEGG" id="sag:SAG2093"/>
<dbReference type="PATRIC" id="fig|208435.3.peg.2095"/>
<dbReference type="HOGENOM" id="CLU_040469_3_2_9"/>
<dbReference type="OrthoDB" id="9776733at2"/>
<dbReference type="Proteomes" id="UP000000821">
    <property type="component" value="Chromosome"/>
</dbReference>
<dbReference type="GO" id="GO:0005829">
    <property type="term" value="C:cytosol"/>
    <property type="evidence" value="ECO:0007669"/>
    <property type="project" value="TreeGrafter"/>
</dbReference>
<dbReference type="GO" id="GO:0005524">
    <property type="term" value="F:ATP binding"/>
    <property type="evidence" value="ECO:0007669"/>
    <property type="project" value="UniProtKB-UniRule"/>
</dbReference>
<dbReference type="GO" id="GO:0016887">
    <property type="term" value="F:ATP hydrolysis activity"/>
    <property type="evidence" value="ECO:0007669"/>
    <property type="project" value="InterPro"/>
</dbReference>
<dbReference type="GO" id="GO:0140664">
    <property type="term" value="F:ATP-dependent DNA damage sensor activity"/>
    <property type="evidence" value="ECO:0007669"/>
    <property type="project" value="InterPro"/>
</dbReference>
<dbReference type="GO" id="GO:0003684">
    <property type="term" value="F:damaged DNA binding"/>
    <property type="evidence" value="ECO:0007669"/>
    <property type="project" value="UniProtKB-UniRule"/>
</dbReference>
<dbReference type="GO" id="GO:0003697">
    <property type="term" value="F:single-stranded DNA binding"/>
    <property type="evidence" value="ECO:0007669"/>
    <property type="project" value="UniProtKB-UniRule"/>
</dbReference>
<dbReference type="GO" id="GO:0006310">
    <property type="term" value="P:DNA recombination"/>
    <property type="evidence" value="ECO:0007669"/>
    <property type="project" value="UniProtKB-UniRule"/>
</dbReference>
<dbReference type="GO" id="GO:0006281">
    <property type="term" value="P:DNA repair"/>
    <property type="evidence" value="ECO:0007669"/>
    <property type="project" value="UniProtKB-UniRule"/>
</dbReference>
<dbReference type="GO" id="GO:0009432">
    <property type="term" value="P:SOS response"/>
    <property type="evidence" value="ECO:0007669"/>
    <property type="project" value="UniProtKB-UniRule"/>
</dbReference>
<dbReference type="CDD" id="cd00983">
    <property type="entry name" value="RecA"/>
    <property type="match status" value="1"/>
</dbReference>
<dbReference type="FunFam" id="3.40.50.300:FF:000087">
    <property type="entry name" value="Recombinase RecA"/>
    <property type="match status" value="1"/>
</dbReference>
<dbReference type="Gene3D" id="3.40.50.300">
    <property type="entry name" value="P-loop containing nucleotide triphosphate hydrolases"/>
    <property type="match status" value="1"/>
</dbReference>
<dbReference type="HAMAP" id="MF_00268">
    <property type="entry name" value="RecA"/>
    <property type="match status" value="1"/>
</dbReference>
<dbReference type="InterPro" id="IPR003593">
    <property type="entry name" value="AAA+_ATPase"/>
</dbReference>
<dbReference type="InterPro" id="IPR013765">
    <property type="entry name" value="DNA_recomb/repair_RecA"/>
</dbReference>
<dbReference type="InterPro" id="IPR020584">
    <property type="entry name" value="DNA_recomb/repair_RecA_CS"/>
</dbReference>
<dbReference type="InterPro" id="IPR027417">
    <property type="entry name" value="P-loop_NTPase"/>
</dbReference>
<dbReference type="InterPro" id="IPR049261">
    <property type="entry name" value="RecA-like_C"/>
</dbReference>
<dbReference type="InterPro" id="IPR049428">
    <property type="entry name" value="RecA-like_N"/>
</dbReference>
<dbReference type="InterPro" id="IPR020588">
    <property type="entry name" value="RecA_ATP-bd"/>
</dbReference>
<dbReference type="InterPro" id="IPR023400">
    <property type="entry name" value="RecA_C_sf"/>
</dbReference>
<dbReference type="InterPro" id="IPR020587">
    <property type="entry name" value="RecA_monomer-monomer_interface"/>
</dbReference>
<dbReference type="NCBIfam" id="TIGR02012">
    <property type="entry name" value="tigrfam_recA"/>
    <property type="match status" value="1"/>
</dbReference>
<dbReference type="PANTHER" id="PTHR45900:SF1">
    <property type="entry name" value="MITOCHONDRIAL DNA REPAIR PROTEIN RECA HOMOLOG-RELATED"/>
    <property type="match status" value="1"/>
</dbReference>
<dbReference type="PANTHER" id="PTHR45900">
    <property type="entry name" value="RECA"/>
    <property type="match status" value="1"/>
</dbReference>
<dbReference type="Pfam" id="PF00154">
    <property type="entry name" value="RecA"/>
    <property type="match status" value="1"/>
</dbReference>
<dbReference type="Pfam" id="PF21096">
    <property type="entry name" value="RecA_C"/>
    <property type="match status" value="1"/>
</dbReference>
<dbReference type="PRINTS" id="PR00142">
    <property type="entry name" value="RECA"/>
</dbReference>
<dbReference type="SMART" id="SM00382">
    <property type="entry name" value="AAA"/>
    <property type="match status" value="1"/>
</dbReference>
<dbReference type="SUPFAM" id="SSF52540">
    <property type="entry name" value="P-loop containing nucleoside triphosphate hydrolases"/>
    <property type="match status" value="1"/>
</dbReference>
<dbReference type="SUPFAM" id="SSF54752">
    <property type="entry name" value="RecA protein, C-terminal domain"/>
    <property type="match status" value="1"/>
</dbReference>
<dbReference type="PROSITE" id="PS00321">
    <property type="entry name" value="RECA_1"/>
    <property type="match status" value="1"/>
</dbReference>
<dbReference type="PROSITE" id="PS50162">
    <property type="entry name" value="RECA_2"/>
    <property type="match status" value="1"/>
</dbReference>
<dbReference type="PROSITE" id="PS50163">
    <property type="entry name" value="RECA_3"/>
    <property type="match status" value="1"/>
</dbReference>
<comment type="function">
    <text evidence="1">Can catalyze the hydrolysis of ATP in the presence of single-stranded DNA, the ATP-dependent uptake of single-stranded DNA by duplex DNA, and the ATP-dependent hybridization of homologous single-stranded DNAs. It interacts with LexA causing its activation and leading to its autocatalytic cleavage.</text>
</comment>
<comment type="subcellular location">
    <subcellularLocation>
        <location evidence="1">Cytoplasm</location>
    </subcellularLocation>
</comment>
<comment type="similarity">
    <text evidence="1">Belongs to the RecA family.</text>
</comment>
<proteinExistence type="inferred from homology"/>
<feature type="chain" id="PRO_0000122849" description="Protein RecA">
    <location>
        <begin position="1"/>
        <end position="379"/>
    </location>
</feature>
<feature type="binding site" evidence="1">
    <location>
        <begin position="79"/>
        <end position="86"/>
    </location>
    <ligand>
        <name>ATP</name>
        <dbReference type="ChEBI" id="CHEBI:30616"/>
    </ligand>
</feature>
<evidence type="ECO:0000255" key="1">
    <source>
        <dbReference type="HAMAP-Rule" id="MF_00268"/>
    </source>
</evidence>
<keyword id="KW-0067">ATP-binding</keyword>
<keyword id="KW-0963">Cytoplasm</keyword>
<keyword id="KW-0227">DNA damage</keyword>
<keyword id="KW-0233">DNA recombination</keyword>
<keyword id="KW-0234">DNA repair</keyword>
<keyword id="KW-0238">DNA-binding</keyword>
<keyword id="KW-0547">Nucleotide-binding</keyword>
<keyword id="KW-1185">Reference proteome</keyword>
<keyword id="KW-0742">SOS response</keyword>